<keyword id="KW-0413">Isomerase</keyword>
<keyword id="KW-0460">Magnesium</keyword>
<keyword id="KW-0479">Metal-binding</keyword>
<keyword id="KW-0597">Phosphoprotein</keyword>
<organism>
    <name type="scientific">Ruthia magnifica subsp. Calyptogena magnifica</name>
    <dbReference type="NCBI Taxonomy" id="413404"/>
    <lineage>
        <taxon>Bacteria</taxon>
        <taxon>Pseudomonadati</taxon>
        <taxon>Pseudomonadota</taxon>
        <taxon>Gammaproteobacteria</taxon>
        <taxon>Candidatus Pseudothioglobaceae</taxon>
        <taxon>Candidatus Ruthturnera</taxon>
    </lineage>
</organism>
<name>GLMM_RUTMC</name>
<sequence>MDNYFGTDGMRGKVGVEPITADFFLKLGWAVGSVLAKRAKASVIIGKDTRVSGYLFESALEAGFLSAGVDVGLLGPMPTPAVAYLTQTYNASAGVVISASHNNFQDNGVKFFSAKGLKLSSQYQSEIEKKLAETMISVGADKIGKAYRYEQPLGRYIEFCKSTFDRTQSLLGLNIVIDCANGATYHIAQSVFSELGANINIINNTPDGFNINEHCGATDTKYLQQVVLESKADLGIAFDGDGDRLIMIDENGELVDGDELVFIIAKAWQSQGRLVNNTVVGTKMSNLGMHHALRDLDIKFIEADVGDRFVMEKMQKSGSILGGEGSGHIICLNKTTSGDGIISALQVLEVLVKSQSSLAKLKQSMEKYPQILINVKTQARINLKNYTKLQRTQLAVEQTLGDESRVLIRVSGTEPLIRVMVEAKDKIIAQQGAEKLSNIFK</sequence>
<accession>A1AVH5</accession>
<feature type="chain" id="PRO_0000305669" description="Phosphoglucosamine mutase">
    <location>
        <begin position="1"/>
        <end position="441"/>
    </location>
</feature>
<feature type="active site" description="Phosphoserine intermediate" evidence="1">
    <location>
        <position position="100"/>
    </location>
</feature>
<feature type="binding site" description="via phosphate group" evidence="1">
    <location>
        <position position="100"/>
    </location>
    <ligand>
        <name>Mg(2+)</name>
        <dbReference type="ChEBI" id="CHEBI:18420"/>
    </ligand>
</feature>
<feature type="binding site" evidence="1">
    <location>
        <position position="239"/>
    </location>
    <ligand>
        <name>Mg(2+)</name>
        <dbReference type="ChEBI" id="CHEBI:18420"/>
    </ligand>
</feature>
<feature type="binding site" evidence="1">
    <location>
        <position position="241"/>
    </location>
    <ligand>
        <name>Mg(2+)</name>
        <dbReference type="ChEBI" id="CHEBI:18420"/>
    </ligand>
</feature>
<feature type="binding site" evidence="1">
    <location>
        <position position="243"/>
    </location>
    <ligand>
        <name>Mg(2+)</name>
        <dbReference type="ChEBI" id="CHEBI:18420"/>
    </ligand>
</feature>
<feature type="modified residue" description="Phosphoserine" evidence="1">
    <location>
        <position position="100"/>
    </location>
</feature>
<gene>
    <name evidence="1" type="primary">glmM</name>
    <name type="ordered locus">Rmag_0138</name>
</gene>
<dbReference type="EC" id="5.4.2.10" evidence="1"/>
<dbReference type="EMBL" id="CP000488">
    <property type="protein sequence ID" value="ABL01932.1"/>
    <property type="molecule type" value="Genomic_DNA"/>
</dbReference>
<dbReference type="RefSeq" id="WP_011737558.1">
    <property type="nucleotide sequence ID" value="NC_008610.1"/>
</dbReference>
<dbReference type="SMR" id="A1AVH5"/>
<dbReference type="STRING" id="413404.Rmag_0138"/>
<dbReference type="KEGG" id="rma:Rmag_0138"/>
<dbReference type="eggNOG" id="COG1109">
    <property type="taxonomic scope" value="Bacteria"/>
</dbReference>
<dbReference type="HOGENOM" id="CLU_016950_7_0_6"/>
<dbReference type="OrthoDB" id="9803322at2"/>
<dbReference type="Proteomes" id="UP000002587">
    <property type="component" value="Chromosome"/>
</dbReference>
<dbReference type="GO" id="GO:0005829">
    <property type="term" value="C:cytosol"/>
    <property type="evidence" value="ECO:0007669"/>
    <property type="project" value="TreeGrafter"/>
</dbReference>
<dbReference type="GO" id="GO:0000287">
    <property type="term" value="F:magnesium ion binding"/>
    <property type="evidence" value="ECO:0007669"/>
    <property type="project" value="UniProtKB-UniRule"/>
</dbReference>
<dbReference type="GO" id="GO:0008966">
    <property type="term" value="F:phosphoglucosamine mutase activity"/>
    <property type="evidence" value="ECO:0007669"/>
    <property type="project" value="UniProtKB-UniRule"/>
</dbReference>
<dbReference type="GO" id="GO:0004615">
    <property type="term" value="F:phosphomannomutase activity"/>
    <property type="evidence" value="ECO:0007669"/>
    <property type="project" value="TreeGrafter"/>
</dbReference>
<dbReference type="GO" id="GO:0005975">
    <property type="term" value="P:carbohydrate metabolic process"/>
    <property type="evidence" value="ECO:0007669"/>
    <property type="project" value="InterPro"/>
</dbReference>
<dbReference type="GO" id="GO:0009252">
    <property type="term" value="P:peptidoglycan biosynthetic process"/>
    <property type="evidence" value="ECO:0007669"/>
    <property type="project" value="TreeGrafter"/>
</dbReference>
<dbReference type="GO" id="GO:0006048">
    <property type="term" value="P:UDP-N-acetylglucosamine biosynthetic process"/>
    <property type="evidence" value="ECO:0007669"/>
    <property type="project" value="TreeGrafter"/>
</dbReference>
<dbReference type="CDD" id="cd05802">
    <property type="entry name" value="GlmM"/>
    <property type="match status" value="1"/>
</dbReference>
<dbReference type="FunFam" id="3.40.120.10:FF:000001">
    <property type="entry name" value="Phosphoglucosamine mutase"/>
    <property type="match status" value="1"/>
</dbReference>
<dbReference type="FunFam" id="3.40.120.10:FF:000003">
    <property type="entry name" value="Phosphoglucosamine mutase"/>
    <property type="match status" value="1"/>
</dbReference>
<dbReference type="Gene3D" id="3.40.120.10">
    <property type="entry name" value="Alpha-D-Glucose-1,6-Bisphosphate, subunit A, domain 3"/>
    <property type="match status" value="3"/>
</dbReference>
<dbReference type="Gene3D" id="3.30.310.50">
    <property type="entry name" value="Alpha-D-phosphohexomutase, C-terminal domain"/>
    <property type="match status" value="1"/>
</dbReference>
<dbReference type="HAMAP" id="MF_01554_B">
    <property type="entry name" value="GlmM_B"/>
    <property type="match status" value="1"/>
</dbReference>
<dbReference type="InterPro" id="IPR005844">
    <property type="entry name" value="A-D-PHexomutase_a/b/a-I"/>
</dbReference>
<dbReference type="InterPro" id="IPR016055">
    <property type="entry name" value="A-D-PHexomutase_a/b/a-I/II/III"/>
</dbReference>
<dbReference type="InterPro" id="IPR005845">
    <property type="entry name" value="A-D-PHexomutase_a/b/a-II"/>
</dbReference>
<dbReference type="InterPro" id="IPR005846">
    <property type="entry name" value="A-D-PHexomutase_a/b/a-III"/>
</dbReference>
<dbReference type="InterPro" id="IPR005843">
    <property type="entry name" value="A-D-PHexomutase_C"/>
</dbReference>
<dbReference type="InterPro" id="IPR036900">
    <property type="entry name" value="A-D-PHexomutase_C_sf"/>
</dbReference>
<dbReference type="InterPro" id="IPR005841">
    <property type="entry name" value="Alpha-D-phosphohexomutase_SF"/>
</dbReference>
<dbReference type="InterPro" id="IPR006352">
    <property type="entry name" value="GlmM_bact"/>
</dbReference>
<dbReference type="InterPro" id="IPR050060">
    <property type="entry name" value="Phosphoglucosamine_mutase"/>
</dbReference>
<dbReference type="NCBIfam" id="TIGR01455">
    <property type="entry name" value="glmM"/>
    <property type="match status" value="1"/>
</dbReference>
<dbReference type="NCBIfam" id="NF008139">
    <property type="entry name" value="PRK10887.1"/>
    <property type="match status" value="1"/>
</dbReference>
<dbReference type="PANTHER" id="PTHR42946:SF1">
    <property type="entry name" value="PHOSPHOGLUCOMUTASE (ALPHA-D-GLUCOSE-1,6-BISPHOSPHATE-DEPENDENT)"/>
    <property type="match status" value="1"/>
</dbReference>
<dbReference type="PANTHER" id="PTHR42946">
    <property type="entry name" value="PHOSPHOHEXOSE MUTASE"/>
    <property type="match status" value="1"/>
</dbReference>
<dbReference type="Pfam" id="PF02878">
    <property type="entry name" value="PGM_PMM_I"/>
    <property type="match status" value="1"/>
</dbReference>
<dbReference type="Pfam" id="PF02879">
    <property type="entry name" value="PGM_PMM_II"/>
    <property type="match status" value="1"/>
</dbReference>
<dbReference type="Pfam" id="PF02880">
    <property type="entry name" value="PGM_PMM_III"/>
    <property type="match status" value="1"/>
</dbReference>
<dbReference type="Pfam" id="PF00408">
    <property type="entry name" value="PGM_PMM_IV"/>
    <property type="match status" value="1"/>
</dbReference>
<dbReference type="PRINTS" id="PR00509">
    <property type="entry name" value="PGMPMM"/>
</dbReference>
<dbReference type="SUPFAM" id="SSF55957">
    <property type="entry name" value="Phosphoglucomutase, C-terminal domain"/>
    <property type="match status" value="1"/>
</dbReference>
<dbReference type="SUPFAM" id="SSF53738">
    <property type="entry name" value="Phosphoglucomutase, first 3 domains"/>
    <property type="match status" value="3"/>
</dbReference>
<protein>
    <recommendedName>
        <fullName evidence="1">Phosphoglucosamine mutase</fullName>
        <ecNumber evidence="1">5.4.2.10</ecNumber>
    </recommendedName>
</protein>
<evidence type="ECO:0000255" key="1">
    <source>
        <dbReference type="HAMAP-Rule" id="MF_01554"/>
    </source>
</evidence>
<reference key="1">
    <citation type="journal article" date="2007" name="Science">
        <title>The Calyptogena magnifica chemoautotrophic symbiont genome.</title>
        <authorList>
            <person name="Newton I.L.G."/>
            <person name="Woyke T."/>
            <person name="Auchtung T.A."/>
            <person name="Dilly G.F."/>
            <person name="Dutton R.J."/>
            <person name="Fisher M.C."/>
            <person name="Fontanez K.M."/>
            <person name="Lau E."/>
            <person name="Stewart F.J."/>
            <person name="Richardson P.M."/>
            <person name="Barry K.W."/>
            <person name="Saunders E."/>
            <person name="Detter J.C."/>
            <person name="Wu D."/>
            <person name="Eisen J.A."/>
            <person name="Cavanaugh C.M."/>
        </authorList>
    </citation>
    <scope>NUCLEOTIDE SEQUENCE [LARGE SCALE GENOMIC DNA]</scope>
</reference>
<comment type="function">
    <text evidence="1">Catalyzes the conversion of glucosamine-6-phosphate to glucosamine-1-phosphate.</text>
</comment>
<comment type="catalytic activity">
    <reaction evidence="1">
        <text>alpha-D-glucosamine 1-phosphate = D-glucosamine 6-phosphate</text>
        <dbReference type="Rhea" id="RHEA:23424"/>
        <dbReference type="ChEBI" id="CHEBI:58516"/>
        <dbReference type="ChEBI" id="CHEBI:58725"/>
        <dbReference type="EC" id="5.4.2.10"/>
    </reaction>
</comment>
<comment type="cofactor">
    <cofactor evidence="1">
        <name>Mg(2+)</name>
        <dbReference type="ChEBI" id="CHEBI:18420"/>
    </cofactor>
    <text evidence="1">Binds 1 Mg(2+) ion per subunit.</text>
</comment>
<comment type="PTM">
    <text evidence="1">Activated by phosphorylation.</text>
</comment>
<comment type="similarity">
    <text evidence="1">Belongs to the phosphohexose mutase family.</text>
</comment>
<proteinExistence type="inferred from homology"/>